<evidence type="ECO:0000255" key="1">
    <source>
        <dbReference type="HAMAP-Rule" id="MF_00537"/>
    </source>
</evidence>
<evidence type="ECO:0000256" key="2">
    <source>
        <dbReference type="SAM" id="MobiDB-lite"/>
    </source>
</evidence>
<evidence type="ECO:0000305" key="3"/>
<protein>
    <recommendedName>
        <fullName evidence="1">Small ribosomal subunit protein uS14</fullName>
    </recommendedName>
    <alternativeName>
        <fullName evidence="3">30S ribosomal protein S14</fullName>
    </alternativeName>
</protein>
<gene>
    <name evidence="1" type="primary">rpsN</name>
    <name type="ordered locus">Xaut_4785</name>
</gene>
<dbReference type="EMBL" id="CP000781">
    <property type="protein sequence ID" value="ABS70003.1"/>
    <property type="molecule type" value="Genomic_DNA"/>
</dbReference>
<dbReference type="SMR" id="A7IPQ7"/>
<dbReference type="STRING" id="78245.Xaut_4785"/>
<dbReference type="KEGG" id="xau:Xaut_4785"/>
<dbReference type="eggNOG" id="COG0199">
    <property type="taxonomic scope" value="Bacteria"/>
</dbReference>
<dbReference type="HOGENOM" id="CLU_139869_0_1_5"/>
<dbReference type="OrthoDB" id="9810484at2"/>
<dbReference type="PhylomeDB" id="A7IPQ7"/>
<dbReference type="Proteomes" id="UP000002417">
    <property type="component" value="Chromosome"/>
</dbReference>
<dbReference type="GO" id="GO:0005737">
    <property type="term" value="C:cytoplasm"/>
    <property type="evidence" value="ECO:0007669"/>
    <property type="project" value="UniProtKB-ARBA"/>
</dbReference>
<dbReference type="GO" id="GO:0015935">
    <property type="term" value="C:small ribosomal subunit"/>
    <property type="evidence" value="ECO:0007669"/>
    <property type="project" value="TreeGrafter"/>
</dbReference>
<dbReference type="GO" id="GO:0019843">
    <property type="term" value="F:rRNA binding"/>
    <property type="evidence" value="ECO:0007669"/>
    <property type="project" value="UniProtKB-UniRule"/>
</dbReference>
<dbReference type="GO" id="GO:0003735">
    <property type="term" value="F:structural constituent of ribosome"/>
    <property type="evidence" value="ECO:0007669"/>
    <property type="project" value="InterPro"/>
</dbReference>
<dbReference type="GO" id="GO:0006412">
    <property type="term" value="P:translation"/>
    <property type="evidence" value="ECO:0007669"/>
    <property type="project" value="UniProtKB-UniRule"/>
</dbReference>
<dbReference type="FunFam" id="1.10.287.1480:FF:000001">
    <property type="entry name" value="30S ribosomal protein S14"/>
    <property type="match status" value="1"/>
</dbReference>
<dbReference type="Gene3D" id="1.10.287.1480">
    <property type="match status" value="1"/>
</dbReference>
<dbReference type="HAMAP" id="MF_00537">
    <property type="entry name" value="Ribosomal_uS14_1"/>
    <property type="match status" value="1"/>
</dbReference>
<dbReference type="InterPro" id="IPR001209">
    <property type="entry name" value="Ribosomal_uS14"/>
</dbReference>
<dbReference type="InterPro" id="IPR023036">
    <property type="entry name" value="Ribosomal_uS14_bac/plastid"/>
</dbReference>
<dbReference type="InterPro" id="IPR018271">
    <property type="entry name" value="Ribosomal_uS14_CS"/>
</dbReference>
<dbReference type="NCBIfam" id="NF006477">
    <property type="entry name" value="PRK08881.1"/>
    <property type="match status" value="1"/>
</dbReference>
<dbReference type="PANTHER" id="PTHR19836">
    <property type="entry name" value="30S RIBOSOMAL PROTEIN S14"/>
    <property type="match status" value="1"/>
</dbReference>
<dbReference type="PANTHER" id="PTHR19836:SF19">
    <property type="entry name" value="SMALL RIBOSOMAL SUBUNIT PROTEIN US14M"/>
    <property type="match status" value="1"/>
</dbReference>
<dbReference type="Pfam" id="PF00253">
    <property type="entry name" value="Ribosomal_S14"/>
    <property type="match status" value="1"/>
</dbReference>
<dbReference type="SUPFAM" id="SSF57716">
    <property type="entry name" value="Glucocorticoid receptor-like (DNA-binding domain)"/>
    <property type="match status" value="1"/>
</dbReference>
<dbReference type="PROSITE" id="PS00527">
    <property type="entry name" value="RIBOSOMAL_S14"/>
    <property type="match status" value="1"/>
</dbReference>
<accession>A7IPQ7</accession>
<sequence length="101" mass="11557">MAKKSAIETNERRRKLATGHAAKRARLKAIVNDKTLPIEERFQATLKLAEMPRNGAKIRIRNRCEVTGRPRAFYRKLKMSRIALRELGNQGMVPGLVKSSW</sequence>
<feature type="chain" id="PRO_1000128646" description="Small ribosomal subunit protein uS14">
    <location>
        <begin position="1"/>
        <end position="101"/>
    </location>
</feature>
<feature type="region of interest" description="Disordered" evidence="2">
    <location>
        <begin position="1"/>
        <end position="20"/>
    </location>
</feature>
<feature type="compositionally biased region" description="Basic and acidic residues" evidence="2">
    <location>
        <begin position="1"/>
        <end position="11"/>
    </location>
</feature>
<comment type="function">
    <text evidence="1">Binds 16S rRNA, required for the assembly of 30S particles and may also be responsible for determining the conformation of the 16S rRNA at the A site.</text>
</comment>
<comment type="subunit">
    <text evidence="1">Part of the 30S ribosomal subunit. Contacts proteins S3 and S10.</text>
</comment>
<comment type="similarity">
    <text evidence="1">Belongs to the universal ribosomal protein uS14 family.</text>
</comment>
<proteinExistence type="inferred from homology"/>
<reference key="1">
    <citation type="submission" date="2007-07" db="EMBL/GenBank/DDBJ databases">
        <title>Complete sequence of chromosome of Xanthobacter autotrophicus Py2.</title>
        <authorList>
            <consortium name="US DOE Joint Genome Institute"/>
            <person name="Copeland A."/>
            <person name="Lucas S."/>
            <person name="Lapidus A."/>
            <person name="Barry K."/>
            <person name="Glavina del Rio T."/>
            <person name="Hammon N."/>
            <person name="Israni S."/>
            <person name="Dalin E."/>
            <person name="Tice H."/>
            <person name="Pitluck S."/>
            <person name="Sims D."/>
            <person name="Brettin T."/>
            <person name="Bruce D."/>
            <person name="Detter J.C."/>
            <person name="Han C."/>
            <person name="Tapia R."/>
            <person name="Brainard J."/>
            <person name="Schmutz J."/>
            <person name="Larimer F."/>
            <person name="Land M."/>
            <person name="Hauser L."/>
            <person name="Kyrpides N."/>
            <person name="Kim E."/>
            <person name="Ensigns S.A."/>
            <person name="Richardson P."/>
        </authorList>
    </citation>
    <scope>NUCLEOTIDE SEQUENCE [LARGE SCALE GENOMIC DNA]</scope>
    <source>
        <strain>ATCC BAA-1158 / Py2</strain>
    </source>
</reference>
<keyword id="KW-1185">Reference proteome</keyword>
<keyword id="KW-0687">Ribonucleoprotein</keyword>
<keyword id="KW-0689">Ribosomal protein</keyword>
<keyword id="KW-0694">RNA-binding</keyword>
<keyword id="KW-0699">rRNA-binding</keyword>
<name>RS14_XANP2</name>
<organism>
    <name type="scientific">Xanthobacter autotrophicus (strain ATCC BAA-1158 / Py2)</name>
    <dbReference type="NCBI Taxonomy" id="78245"/>
    <lineage>
        <taxon>Bacteria</taxon>
        <taxon>Pseudomonadati</taxon>
        <taxon>Pseudomonadota</taxon>
        <taxon>Alphaproteobacteria</taxon>
        <taxon>Hyphomicrobiales</taxon>
        <taxon>Xanthobacteraceae</taxon>
        <taxon>Xanthobacter</taxon>
    </lineage>
</organism>